<protein>
    <recommendedName>
        <fullName evidence="1">Inner membrane-spanning protein YciB</fullName>
    </recommendedName>
</protein>
<organism>
    <name type="scientific">Haemophilus influenzae (strain PittEE)</name>
    <dbReference type="NCBI Taxonomy" id="374930"/>
    <lineage>
        <taxon>Bacteria</taxon>
        <taxon>Pseudomonadati</taxon>
        <taxon>Pseudomonadota</taxon>
        <taxon>Gammaproteobacteria</taxon>
        <taxon>Pasteurellales</taxon>
        <taxon>Pasteurellaceae</taxon>
        <taxon>Haemophilus</taxon>
    </lineage>
</organism>
<proteinExistence type="inferred from homology"/>
<comment type="function">
    <text evidence="1">Plays a role in cell envelope biogenesis, maintenance of cell envelope integrity and membrane homeostasis.</text>
</comment>
<comment type="subcellular location">
    <subcellularLocation>
        <location evidence="1">Cell inner membrane</location>
        <topology evidence="1">Multi-pass membrane protein</topology>
    </subcellularLocation>
</comment>
<comment type="similarity">
    <text evidence="1">Belongs to the YciB family.</text>
</comment>
<accession>A5UDP8</accession>
<evidence type="ECO:0000255" key="1">
    <source>
        <dbReference type="HAMAP-Rule" id="MF_00189"/>
    </source>
</evidence>
<feature type="chain" id="PRO_1000021015" description="Inner membrane-spanning protein YciB">
    <location>
        <begin position="1"/>
        <end position="185"/>
    </location>
</feature>
<feature type="transmembrane region" description="Helical" evidence="1">
    <location>
        <begin position="19"/>
        <end position="39"/>
    </location>
</feature>
<feature type="transmembrane region" description="Helical" evidence="1">
    <location>
        <begin position="53"/>
        <end position="73"/>
    </location>
</feature>
<feature type="transmembrane region" description="Helical" evidence="1">
    <location>
        <begin position="76"/>
        <end position="96"/>
    </location>
</feature>
<feature type="transmembrane region" description="Helical" evidence="1">
    <location>
        <begin position="118"/>
        <end position="138"/>
    </location>
</feature>
<feature type="transmembrane region" description="Helical" evidence="1">
    <location>
        <begin position="149"/>
        <end position="169"/>
    </location>
</feature>
<reference key="1">
    <citation type="journal article" date="2007" name="Genome Biol.">
        <title>Characterization and modeling of the Haemophilus influenzae core and supragenomes based on the complete genomic sequences of Rd and 12 clinical nontypeable strains.</title>
        <authorList>
            <person name="Hogg J.S."/>
            <person name="Hu F.Z."/>
            <person name="Janto B."/>
            <person name="Boissy R."/>
            <person name="Hayes J."/>
            <person name="Keefe R."/>
            <person name="Post J.C."/>
            <person name="Ehrlich G.D."/>
        </authorList>
    </citation>
    <scope>NUCLEOTIDE SEQUENCE [LARGE SCALE GENOMIC DNA]</scope>
    <source>
        <strain>PittEE</strain>
    </source>
</reference>
<name>YCIB_HAEIE</name>
<sequence>MKQLLDFIPLILFFITYKLGGVREAAIVLVVATILQIVILKWKYGTVEKQQKIMASAVVFFGLLTAYFNEIRYLQWKVTIINGLFAIVLLIAQFQFKTPLIKKLLGKELQLPEKAWNTLNFGWAIFFIICMLVNIYISHNMSEEAWVDFKSFGIIGMTVIATIISGVYIYRYLPKDGSNSKDGEK</sequence>
<keyword id="KW-0997">Cell inner membrane</keyword>
<keyword id="KW-1003">Cell membrane</keyword>
<keyword id="KW-0472">Membrane</keyword>
<keyword id="KW-0812">Transmembrane</keyword>
<keyword id="KW-1133">Transmembrane helix</keyword>
<gene>
    <name evidence="1" type="primary">yciB</name>
    <name type="ordered locus">CGSHiEE_07930</name>
</gene>
<dbReference type="EMBL" id="CP000671">
    <property type="protein sequence ID" value="ABQ98899.1"/>
    <property type="molecule type" value="Genomic_DNA"/>
</dbReference>
<dbReference type="SMR" id="A5UDP8"/>
<dbReference type="KEGG" id="hip:CGSHiEE_07930"/>
<dbReference type="HOGENOM" id="CLU_089554_2_0_6"/>
<dbReference type="GO" id="GO:0005886">
    <property type="term" value="C:plasma membrane"/>
    <property type="evidence" value="ECO:0007669"/>
    <property type="project" value="UniProtKB-SubCell"/>
</dbReference>
<dbReference type="HAMAP" id="MF_00189">
    <property type="entry name" value="YciB"/>
    <property type="match status" value="1"/>
</dbReference>
<dbReference type="InterPro" id="IPR006008">
    <property type="entry name" value="YciB"/>
</dbReference>
<dbReference type="NCBIfam" id="TIGR00997">
    <property type="entry name" value="ispZ"/>
    <property type="match status" value="1"/>
</dbReference>
<dbReference type="NCBIfam" id="NF001324">
    <property type="entry name" value="PRK00259.1-2"/>
    <property type="match status" value="1"/>
</dbReference>
<dbReference type="PANTHER" id="PTHR36917:SF1">
    <property type="entry name" value="INNER MEMBRANE-SPANNING PROTEIN YCIB"/>
    <property type="match status" value="1"/>
</dbReference>
<dbReference type="PANTHER" id="PTHR36917">
    <property type="entry name" value="INTRACELLULAR SEPTATION PROTEIN A-RELATED"/>
    <property type="match status" value="1"/>
</dbReference>
<dbReference type="Pfam" id="PF04279">
    <property type="entry name" value="IspA"/>
    <property type="match status" value="1"/>
</dbReference>